<reference key="1">
    <citation type="journal article" date="2013" name="Toxicon">
        <title>mu-Theraphotoxin-An1a: primary structure determination and assessment of the pharmacological activity of a promiscuous anti-insect toxin from the venom of the tarantula Acanthoscurria natalensis (Mygalomorphae, Theraphosidae).</title>
        <authorList>
            <person name="Rates B."/>
            <person name="Prates M.V."/>
            <person name="Verano-Braga T."/>
            <person name="da Rocha A.P."/>
            <person name="Roepstorff P."/>
            <person name="Borges C.L."/>
            <person name="Lapied B."/>
            <person name="Murillo L."/>
            <person name="Pimenta A.M."/>
            <person name="Biondi I."/>
            <person name="De Lima M.E."/>
        </authorList>
    </citation>
    <scope>PROTEIN SEQUENCE</scope>
    <scope>FUNCTION</scope>
    <scope>SUBCELLULAR LOCATION</scope>
    <scope>DISULFIDE BONDS</scope>
    <scope>MASS SPECTROMETRY</scope>
    <source>
        <tissue>Venom</tissue>
    </source>
</reference>
<evidence type="ECO:0000250" key="1">
    <source>
        <dbReference type="UniProtKB" id="P49265"/>
    </source>
</evidence>
<evidence type="ECO:0000269" key="2">
    <source>
    </source>
</evidence>
<evidence type="ECO:0000303" key="3">
    <source>
    </source>
</evidence>
<evidence type="ECO:0000305" key="4"/>
<evidence type="ECO:0000305" key="5">
    <source>
    </source>
</evidence>
<organism>
    <name type="scientific">Acanthoscurria natalensis</name>
    <name type="common">Tarantula spider</name>
    <dbReference type="NCBI Taxonomy" id="1108046"/>
    <lineage>
        <taxon>Eukaryota</taxon>
        <taxon>Metazoa</taxon>
        <taxon>Ecdysozoa</taxon>
        <taxon>Arthropoda</taxon>
        <taxon>Chelicerata</taxon>
        <taxon>Arachnida</taxon>
        <taxon>Araneae</taxon>
        <taxon>Mygalomorphae</taxon>
        <taxon>Theraphosidae</taxon>
        <taxon>Acanthoscurria</taxon>
    </lineage>
</organism>
<keyword id="KW-0903">Direct protein sequencing</keyword>
<keyword id="KW-1015">Disulfide bond</keyword>
<keyword id="KW-0872">Ion channel impairing toxin</keyword>
<keyword id="KW-0528">Neurotoxin</keyword>
<keyword id="KW-0964">Secreted</keyword>
<keyword id="KW-0800">Toxin</keyword>
<keyword id="KW-0738">Voltage-gated sodium channel impairing toxin</keyword>
<sequence>IIECFFSCEIEKDGKSKEGKPCKPKGDKDKDKKCGGWRCKIKMCIKI</sequence>
<comment type="function">
    <text evidence="2">Is toxic to insects. Reduces amplitude and frequency of spontaneous firing and inhibits voltage-gated sodium current (Nav) in the dorsal unpaired median (DUM) neurons of P.americana.</text>
</comment>
<comment type="subcellular location">
    <subcellularLocation>
        <location evidence="2">Secreted</location>
    </subcellularLocation>
</comment>
<comment type="tissue specificity">
    <text evidence="5">Expressed by the venom gland.</text>
</comment>
<comment type="PTM">
    <text>Contains 3 disulfide bonds.</text>
</comment>
<comment type="mass spectrometry"/>
<comment type="similarity">
    <text evidence="4">Belongs to the neurotoxin 12 (Hwtx-2) family. 01 (Ap1a) subfamily.</text>
</comment>
<feature type="chain" id="PRO_0000420428" description="Mu-theraphotoxin-An1a" evidence="2">
    <location>
        <begin position="1"/>
        <end position="47"/>
    </location>
</feature>
<feature type="disulfide bond" evidence="1">
    <location>
        <begin position="4"/>
        <end position="34"/>
    </location>
</feature>
<feature type="disulfide bond" evidence="1">
    <location>
        <begin position="8"/>
        <end position="39"/>
    </location>
</feature>
<feature type="disulfide bond" evidence="1">
    <location>
        <begin position="22"/>
        <end position="44"/>
    </location>
</feature>
<feature type="unsure residue" description="I or L" evidence="5">
    <location>
        <position position="41"/>
    </location>
</feature>
<feature type="unsure residue" description="I or L" evidence="5">
    <location>
        <position position="45"/>
    </location>
</feature>
<feature type="unsure residue" description="I or L" evidence="5">
    <location>
        <position position="47"/>
    </location>
</feature>
<proteinExistence type="evidence at protein level"/>
<name>TXAN1_ACANA</name>
<accession>B3A0P0</accession>
<protein>
    <recommendedName>
        <fullName evidence="3">Mu-theraphotoxin-An1a</fullName>
        <shortName evidence="3">Mu-TRTX-An1a</shortName>
    </recommendedName>
</protein>
<dbReference type="GO" id="GO:0005576">
    <property type="term" value="C:extracellular region"/>
    <property type="evidence" value="ECO:0007669"/>
    <property type="project" value="UniProtKB-SubCell"/>
</dbReference>
<dbReference type="GO" id="GO:0017080">
    <property type="term" value="F:sodium channel regulator activity"/>
    <property type="evidence" value="ECO:0007669"/>
    <property type="project" value="UniProtKB-KW"/>
</dbReference>
<dbReference type="GO" id="GO:0090729">
    <property type="term" value="F:toxin activity"/>
    <property type="evidence" value="ECO:0007669"/>
    <property type="project" value="UniProtKB-KW"/>
</dbReference>
<dbReference type="GO" id="GO:0003254">
    <property type="term" value="P:regulation of membrane depolarization"/>
    <property type="evidence" value="ECO:0000314"/>
    <property type="project" value="UniProtKB"/>
</dbReference>
<dbReference type="InterPro" id="IPR012625">
    <property type="entry name" value="Hwtx-2-like"/>
</dbReference>
<dbReference type="Pfam" id="PF08089">
    <property type="entry name" value="Toxin_20"/>
    <property type="match status" value="1"/>
</dbReference>
<dbReference type="SUPFAM" id="SSF57059">
    <property type="entry name" value="omega toxin-like"/>
    <property type="match status" value="1"/>
</dbReference>